<comment type="function">
    <text evidence="1">Catalyzes the stereoinversion of LL-2,6-diaminopimelate (L,L-DAP) to meso-diaminopimelate (meso-DAP), a precursor of L-lysine and an essential component of the bacterial peptidoglycan.</text>
</comment>
<comment type="catalytic activity">
    <reaction evidence="1">
        <text>(2S,6S)-2,6-diaminopimelate = meso-2,6-diaminopimelate</text>
        <dbReference type="Rhea" id="RHEA:15393"/>
        <dbReference type="ChEBI" id="CHEBI:57609"/>
        <dbReference type="ChEBI" id="CHEBI:57791"/>
        <dbReference type="EC" id="5.1.1.7"/>
    </reaction>
</comment>
<comment type="pathway">
    <text evidence="1">Amino-acid biosynthesis; L-lysine biosynthesis via DAP pathway; DL-2,6-diaminopimelate from LL-2,6-diaminopimelate: step 1/1.</text>
</comment>
<comment type="subunit">
    <text evidence="1">Homodimer.</text>
</comment>
<comment type="subcellular location">
    <subcellularLocation>
        <location evidence="1">Cytoplasm</location>
    </subcellularLocation>
</comment>
<comment type="similarity">
    <text evidence="1">Belongs to the diaminopimelate epimerase family.</text>
</comment>
<organism>
    <name type="scientific">Bacillus anthracis (strain A0248)</name>
    <dbReference type="NCBI Taxonomy" id="592021"/>
    <lineage>
        <taxon>Bacteria</taxon>
        <taxon>Bacillati</taxon>
        <taxon>Bacillota</taxon>
        <taxon>Bacilli</taxon>
        <taxon>Bacillales</taxon>
        <taxon>Bacillaceae</taxon>
        <taxon>Bacillus</taxon>
        <taxon>Bacillus cereus group</taxon>
    </lineage>
</organism>
<evidence type="ECO:0000255" key="1">
    <source>
        <dbReference type="HAMAP-Rule" id="MF_00197"/>
    </source>
</evidence>
<dbReference type="EC" id="5.1.1.7" evidence="1"/>
<dbReference type="EMBL" id="CP001598">
    <property type="protein sequence ID" value="ACQ49595.1"/>
    <property type="molecule type" value="Genomic_DNA"/>
</dbReference>
<dbReference type="RefSeq" id="WP_000077386.1">
    <property type="nucleotide sequence ID" value="NC_012659.1"/>
</dbReference>
<dbReference type="SMR" id="C3PDH0"/>
<dbReference type="GeneID" id="93006147"/>
<dbReference type="KEGG" id="bai:BAA_5207"/>
<dbReference type="HOGENOM" id="CLU_053306_3_0_9"/>
<dbReference type="UniPathway" id="UPA00034">
    <property type="reaction ID" value="UER00025"/>
</dbReference>
<dbReference type="GO" id="GO:0005829">
    <property type="term" value="C:cytosol"/>
    <property type="evidence" value="ECO:0007669"/>
    <property type="project" value="TreeGrafter"/>
</dbReference>
<dbReference type="GO" id="GO:0008837">
    <property type="term" value="F:diaminopimelate epimerase activity"/>
    <property type="evidence" value="ECO:0007669"/>
    <property type="project" value="UniProtKB-UniRule"/>
</dbReference>
<dbReference type="GO" id="GO:0009089">
    <property type="term" value="P:lysine biosynthetic process via diaminopimelate"/>
    <property type="evidence" value="ECO:0007669"/>
    <property type="project" value="UniProtKB-UniRule"/>
</dbReference>
<dbReference type="FunFam" id="3.10.310.10:FF:000004">
    <property type="entry name" value="Diaminopimelate epimerase"/>
    <property type="match status" value="1"/>
</dbReference>
<dbReference type="FunFam" id="3.10.310.10:FF:000006">
    <property type="entry name" value="Diaminopimelate epimerase"/>
    <property type="match status" value="1"/>
</dbReference>
<dbReference type="Gene3D" id="3.10.310.10">
    <property type="entry name" value="Diaminopimelate Epimerase, Chain A, domain 1"/>
    <property type="match status" value="2"/>
</dbReference>
<dbReference type="HAMAP" id="MF_00197">
    <property type="entry name" value="DAP_epimerase"/>
    <property type="match status" value="1"/>
</dbReference>
<dbReference type="InterPro" id="IPR018510">
    <property type="entry name" value="DAP_epimerase_AS"/>
</dbReference>
<dbReference type="InterPro" id="IPR001653">
    <property type="entry name" value="DAP_epimerase_DapF"/>
</dbReference>
<dbReference type="NCBIfam" id="TIGR00652">
    <property type="entry name" value="DapF"/>
    <property type="match status" value="1"/>
</dbReference>
<dbReference type="PANTHER" id="PTHR31689:SF0">
    <property type="entry name" value="DIAMINOPIMELATE EPIMERASE"/>
    <property type="match status" value="1"/>
</dbReference>
<dbReference type="PANTHER" id="PTHR31689">
    <property type="entry name" value="DIAMINOPIMELATE EPIMERASE, CHLOROPLASTIC"/>
    <property type="match status" value="1"/>
</dbReference>
<dbReference type="Pfam" id="PF01678">
    <property type="entry name" value="DAP_epimerase"/>
    <property type="match status" value="2"/>
</dbReference>
<dbReference type="SUPFAM" id="SSF54506">
    <property type="entry name" value="Diaminopimelate epimerase-like"/>
    <property type="match status" value="1"/>
</dbReference>
<dbReference type="PROSITE" id="PS01326">
    <property type="entry name" value="DAP_EPIMERASE"/>
    <property type="match status" value="1"/>
</dbReference>
<name>DAPF_BACAA</name>
<proteinExistence type="inferred from homology"/>
<feature type="chain" id="PRO_1000124399" description="Diaminopimelate epimerase">
    <location>
        <begin position="1"/>
        <end position="288"/>
    </location>
</feature>
<feature type="active site" description="Proton donor" evidence="1">
    <location>
        <position position="76"/>
    </location>
</feature>
<feature type="active site" description="Proton acceptor" evidence="1">
    <location>
        <position position="226"/>
    </location>
</feature>
<feature type="binding site" evidence="1">
    <location>
        <position position="14"/>
    </location>
    <ligand>
        <name>substrate</name>
    </ligand>
</feature>
<feature type="binding site" evidence="1">
    <location>
        <position position="67"/>
    </location>
    <ligand>
        <name>substrate</name>
    </ligand>
</feature>
<feature type="binding site" evidence="1">
    <location>
        <begin position="77"/>
        <end position="78"/>
    </location>
    <ligand>
        <name>substrate</name>
    </ligand>
</feature>
<feature type="binding site" evidence="1">
    <location>
        <position position="166"/>
    </location>
    <ligand>
        <name>substrate</name>
    </ligand>
</feature>
<feature type="binding site" evidence="1">
    <location>
        <position position="199"/>
    </location>
    <ligand>
        <name>substrate</name>
    </ligand>
</feature>
<feature type="binding site" evidence="1">
    <location>
        <begin position="217"/>
        <end position="218"/>
    </location>
    <ligand>
        <name>substrate</name>
    </ligand>
</feature>
<feature type="binding site" evidence="1">
    <location>
        <begin position="227"/>
        <end position="228"/>
    </location>
    <ligand>
        <name>substrate</name>
    </ligand>
</feature>
<feature type="site" description="Could be important to modulate the pK values of the two catalytic cysteine residues" evidence="1">
    <location>
        <position position="168"/>
    </location>
</feature>
<feature type="site" description="Could be important to modulate the pK values of the two catalytic cysteine residues" evidence="1">
    <location>
        <position position="217"/>
    </location>
</feature>
<protein>
    <recommendedName>
        <fullName evidence="1">Diaminopimelate epimerase</fullName>
        <shortName evidence="1">DAP epimerase</shortName>
        <ecNumber evidence="1">5.1.1.7</ecNumber>
    </recommendedName>
    <alternativeName>
        <fullName evidence="1">PLP-independent amino acid racemase</fullName>
    </alternativeName>
</protein>
<accession>C3PDH0</accession>
<reference key="1">
    <citation type="submission" date="2009-04" db="EMBL/GenBank/DDBJ databases">
        <title>Genome sequence of Bacillus anthracis A0248.</title>
        <authorList>
            <person name="Dodson R.J."/>
            <person name="Munk A.C."/>
            <person name="Bruce D."/>
            <person name="Detter C."/>
            <person name="Tapia R."/>
            <person name="Sutton G."/>
            <person name="Sims D."/>
            <person name="Brettin T."/>
        </authorList>
    </citation>
    <scope>NUCLEOTIDE SEQUENCE [LARGE SCALE GENOMIC DNA]</scope>
    <source>
        <strain>A0248</strain>
    </source>
</reference>
<keyword id="KW-0028">Amino-acid biosynthesis</keyword>
<keyword id="KW-0963">Cytoplasm</keyword>
<keyword id="KW-0413">Isomerase</keyword>
<keyword id="KW-0457">Lysine biosynthesis</keyword>
<gene>
    <name evidence="1" type="primary">dapF</name>
    <name type="ordered locus">BAA_5207</name>
</gene>
<sequence length="288" mass="31613">MSQFSFTKMHGLGNSYIYVNMFEEQIPEEDLALVAEKVSNINTGIGADGMILICPSDVAPVKMRMFNNDGSEGKSCGNGLRCVAKYAYEHKLVEDTVFTIETLAGIVTAEVTVEEGKVTLAKIDMGAPRLTRAEIPMLGEGETPFIRENFLYNNHRYAFTAVSMGNPHAVIFVDDVEQAPLTTLGPVLETHEMFPERVNVEFIEILNEEEMNFRVWERGSGVTQACGTGACAAVVASILNGKMERGKEITVHLAGGDLMIAWTEEGNVLMKGPAEVICRGVYEYKIEA</sequence>